<reference key="1">
    <citation type="journal article" date="1999" name="Genetics">
        <title>Divergence of the hyperthermophilic archaea Pyrococcus furiosus and P. horikoshii inferred from complete genomic sequences.</title>
        <authorList>
            <person name="Maeder D.L."/>
            <person name="Weiss R.B."/>
            <person name="Dunn D.M."/>
            <person name="Cherry J.L."/>
            <person name="Gonzalez J.M."/>
            <person name="DiRuggiero J."/>
            <person name="Robb F.T."/>
        </authorList>
    </citation>
    <scope>NUCLEOTIDE SEQUENCE [LARGE SCALE GENOMIC DNA]</scope>
    <source>
        <strain>ATCC 43587 / DSM 3638 / JCM 8422 / Vc1</strain>
    </source>
</reference>
<reference key="2">
    <citation type="journal article" date="2004" name="Biochem. Biophys. Res. Commun.">
        <title>Structure determination of fibrillarin from the hyperthermophilic archaeon Pyrococcus furiosus.</title>
        <authorList>
            <person name="Deng L."/>
            <person name="Starostina N.G."/>
            <person name="Liu Z.J."/>
            <person name="Rose J.P."/>
            <person name="Terns R.M."/>
            <person name="Terns M.P."/>
            <person name="Wang B.C."/>
        </authorList>
    </citation>
    <scope>X-RAY CRYSTALLOGRAPHY (1.97 ANGSTROMS)</scope>
    <scope>SUBUNIT</scope>
</reference>
<reference key="3">
    <citation type="journal article" date="2007" name="J. Mol. Biol.">
        <title>Alternative conformations of the archaeal Nop56/58-fibrillarin complex imply flexibility in box C/D RNPs.</title>
        <authorList>
            <person name="Oruganti S."/>
            <person name="Zhang Y."/>
            <person name="Li H."/>
            <person name="Robinson H."/>
            <person name="Terns M.P."/>
            <person name="Terns R.M."/>
            <person name="Yang W."/>
            <person name="Li H."/>
        </authorList>
    </citation>
    <scope>X-RAY CRYSTALLOGRAPHY (2.7 ANGSTROMS) IN COMPLEX WITH NOP5</scope>
    <scope>SUBUNIT</scope>
</reference>
<reference key="4">
    <citation type="journal article" date="2010" name="Mol. Cell">
        <title>Structural basis for substrate placement by an archaeal box C/D ribonucleoprotein particle.</title>
        <authorList>
            <person name="Xue S."/>
            <person name="Wang R."/>
            <person name="Yang F."/>
            <person name="Terns R.M."/>
            <person name="Terns M.P."/>
            <person name="Zhang X."/>
            <person name="Maxwell E.S."/>
            <person name="Li H."/>
        </authorList>
    </citation>
    <scope>X-RAY CRYSTALLOGRAPHY (2.73 ANGSTROMS) IN COMPLEX WITH S-ADENOSYL-L-METHIONINE; RPL7AE; NOP5 AND RNA SUBSTRATE</scope>
    <scope>SUBUNIT</scope>
    <scope>FUNCTION</scope>
</reference>
<reference key="5">
    <citation type="journal article" date="2013" name="Nature">
        <title>The structure of the box C/D enzyme reveals regulation of RNA methylation.</title>
        <authorList>
            <person name="Lapinaite A."/>
            <person name="Simon B."/>
            <person name="Skjaerven L."/>
            <person name="Rakwalska-Bange M."/>
            <person name="Gabel F."/>
            <person name="Carlomagno T."/>
        </authorList>
    </citation>
    <scope>STRUCTURE BY NMR IN COMPLEX WITH RPL7AE; NOP5 AND RNA SUBSTRATE</scope>
    <scope>FUNCTION</scope>
    <scope>SUBUNIT</scope>
</reference>
<protein>
    <recommendedName>
        <fullName evidence="1">Fibrillarin-like rRNA/tRNA 2'-O-methyltransferase</fullName>
        <ecNumber evidence="1">2.1.1.-</ecNumber>
    </recommendedName>
</protein>
<comment type="function">
    <text evidence="1 4 5">Involved in pre-rRNA and tRNA processing. Utilizes the methyl donor S-adenosyl-L-methionine to catalyze the site-specific 2'-hydroxyl methylation of ribose moieties in rRNA and tRNA. Site specificity is provided by a guide RNA that base pairs with the substrate. Methylation occurs at a characteristic distance from the sequence involved in base pairing with the guide RNA.</text>
</comment>
<comment type="subunit">
    <text evidence="1 2 3 4 5">Interacts with nop5. Component of box C/D small ribonucleoprotein (sRNP) particles that contain rpl7ae, FlpA and nop5, plus a guide RNA. These sRNP particles form homodimers, giving rise to an asymmetric holoenzyme.</text>
</comment>
<comment type="interaction">
    <interactant intactId="EBI-16078587">
        <id>Q8U4M2</id>
    </interactant>
    <interactant intactId="EBI-16078570">
        <id>Q8U4M1</id>
        <label>PF0060</label>
    </interactant>
    <organismsDiffer>false</organismsDiffer>
    <experiments>7</experiments>
</comment>
<comment type="similarity">
    <text evidence="1">Belongs to the methyltransferase superfamily. Fibrillarin family.</text>
</comment>
<sequence length="227" mass="25762">MVEVKKHKFPGVYVVIDDDGSEKIATKNLVPGQRVYGERVIKWEGEEYRIWNPHRSKLGAAIVNGLKNFPIKPGKSVLYLGIASGTTASHVSDIVGWEGKIYGIEFSPRVLRELVPIVEERRNIIPILGDATKPEEYRALVTKVDVIFEDVAQPTQAKILIDNAKAYLKRGGYGMIAVKSRSIDVTKEPEQVFKEVERELSEYFEVIERLNLEPYEKDHALFVVRKP</sequence>
<keyword id="KW-0002">3D-structure</keyword>
<keyword id="KW-0489">Methyltransferase</keyword>
<keyword id="KW-1185">Reference proteome</keyword>
<keyword id="KW-0694">RNA-binding</keyword>
<keyword id="KW-0698">rRNA processing</keyword>
<keyword id="KW-0808">Transferase</keyword>
<keyword id="KW-0819">tRNA processing</keyword>
<organism>
    <name type="scientific">Pyrococcus furiosus (strain ATCC 43587 / DSM 3638 / JCM 8422 / Vc1)</name>
    <dbReference type="NCBI Taxonomy" id="186497"/>
    <lineage>
        <taxon>Archaea</taxon>
        <taxon>Methanobacteriati</taxon>
        <taxon>Methanobacteriota</taxon>
        <taxon>Thermococci</taxon>
        <taxon>Thermococcales</taxon>
        <taxon>Thermococcaceae</taxon>
        <taxon>Pyrococcus</taxon>
    </lineage>
</organism>
<dbReference type="EC" id="2.1.1.-" evidence="1"/>
<dbReference type="EMBL" id="AE009950">
    <property type="protein sequence ID" value="AAL80183.1"/>
    <property type="molecule type" value="Genomic_DNA"/>
</dbReference>
<dbReference type="RefSeq" id="WP_011011171.1">
    <property type="nucleotide sequence ID" value="NZ_CP023154.1"/>
</dbReference>
<dbReference type="PDB" id="1PRY">
    <property type="method" value="X-ray"/>
    <property type="resolution" value="1.97 A"/>
    <property type="chains" value="A=1-227"/>
</dbReference>
<dbReference type="PDB" id="2NNW">
    <property type="method" value="X-ray"/>
    <property type="resolution" value="2.70 A"/>
    <property type="chains" value="B/D=1-227"/>
</dbReference>
<dbReference type="PDB" id="3NMU">
    <property type="method" value="X-ray"/>
    <property type="resolution" value="2.73 A"/>
    <property type="chains" value="F/J=1-227"/>
</dbReference>
<dbReference type="PDB" id="3NVK">
    <property type="method" value="X-ray"/>
    <property type="resolution" value="3.21 A"/>
    <property type="chains" value="I/J=1-227"/>
</dbReference>
<dbReference type="PDB" id="3NVM">
    <property type="method" value="X-ray"/>
    <property type="resolution" value="3.41 A"/>
    <property type="chains" value="B=1-227"/>
</dbReference>
<dbReference type="PDB" id="4BY9">
    <property type="method" value="NMR"/>
    <property type="chains" value="E/H/K/N=1-227"/>
</dbReference>
<dbReference type="PDBsum" id="1PRY"/>
<dbReference type="PDBsum" id="2NNW"/>
<dbReference type="PDBsum" id="3NMU"/>
<dbReference type="PDBsum" id="3NVK"/>
<dbReference type="PDBsum" id="3NVM"/>
<dbReference type="PDBsum" id="4BY9"/>
<dbReference type="BMRB" id="Q8U4M2"/>
<dbReference type="SASBDB" id="Q8U4M2"/>
<dbReference type="SMR" id="Q8U4M2"/>
<dbReference type="DIP" id="DIP-60606N"/>
<dbReference type="IntAct" id="Q8U4M2">
    <property type="interactions" value="2"/>
</dbReference>
<dbReference type="STRING" id="186497.PF0059"/>
<dbReference type="PaxDb" id="186497-PF0059"/>
<dbReference type="KEGG" id="pfu:PF0059"/>
<dbReference type="PATRIC" id="fig|186497.12.peg.63"/>
<dbReference type="eggNOG" id="arCOG00078">
    <property type="taxonomic scope" value="Archaea"/>
</dbReference>
<dbReference type="HOGENOM" id="CLU_059055_2_0_2"/>
<dbReference type="OrthoDB" id="6244at2157"/>
<dbReference type="PhylomeDB" id="Q8U4M2"/>
<dbReference type="EvolutionaryTrace" id="Q8U4M2"/>
<dbReference type="Proteomes" id="UP000001013">
    <property type="component" value="Chromosome"/>
</dbReference>
<dbReference type="GO" id="GO:1990259">
    <property type="term" value="F:histone H2AQ104 methyltransferase activity"/>
    <property type="evidence" value="ECO:0007669"/>
    <property type="project" value="TreeGrafter"/>
</dbReference>
<dbReference type="GO" id="GO:0003723">
    <property type="term" value="F:RNA binding"/>
    <property type="evidence" value="ECO:0007669"/>
    <property type="project" value="UniProtKB-UniRule"/>
</dbReference>
<dbReference type="GO" id="GO:0008649">
    <property type="term" value="F:rRNA methyltransferase activity"/>
    <property type="evidence" value="ECO:0007669"/>
    <property type="project" value="TreeGrafter"/>
</dbReference>
<dbReference type="GO" id="GO:0000494">
    <property type="term" value="P:box C/D sno(s)RNA 3'-end processing"/>
    <property type="evidence" value="ECO:0007669"/>
    <property type="project" value="TreeGrafter"/>
</dbReference>
<dbReference type="GO" id="GO:0008033">
    <property type="term" value="P:tRNA processing"/>
    <property type="evidence" value="ECO:0007669"/>
    <property type="project" value="UniProtKB-UniRule"/>
</dbReference>
<dbReference type="CDD" id="cd02440">
    <property type="entry name" value="AdoMet_MTases"/>
    <property type="match status" value="1"/>
</dbReference>
<dbReference type="FunFam" id="3.30.200.20:FF:000613">
    <property type="entry name" value="Fibrillarin-like rRNA/tRNA 2'-O-methyltransferase"/>
    <property type="match status" value="1"/>
</dbReference>
<dbReference type="Gene3D" id="3.30.200.20">
    <property type="entry name" value="Phosphorylase Kinase, domain 1"/>
    <property type="match status" value="1"/>
</dbReference>
<dbReference type="Gene3D" id="3.40.50.150">
    <property type="entry name" value="Vaccinia Virus protein VP39"/>
    <property type="match status" value="1"/>
</dbReference>
<dbReference type="HAMAP" id="MF_00351">
    <property type="entry name" value="RNA_methyltransf_FlpA"/>
    <property type="match status" value="1"/>
</dbReference>
<dbReference type="InterPro" id="IPR000692">
    <property type="entry name" value="Fibrillarin"/>
</dbReference>
<dbReference type="InterPro" id="IPR020813">
    <property type="entry name" value="Fibrillarin_CS"/>
</dbReference>
<dbReference type="InterPro" id="IPR029063">
    <property type="entry name" value="SAM-dependent_MTases_sf"/>
</dbReference>
<dbReference type="NCBIfam" id="NF003276">
    <property type="entry name" value="PRK04266.1-2"/>
    <property type="match status" value="1"/>
</dbReference>
<dbReference type="NCBIfam" id="NF003277">
    <property type="entry name" value="PRK04266.1-3"/>
    <property type="match status" value="1"/>
</dbReference>
<dbReference type="PANTHER" id="PTHR10335:SF17">
    <property type="entry name" value="FIBRILLARIN"/>
    <property type="match status" value="1"/>
</dbReference>
<dbReference type="PANTHER" id="PTHR10335">
    <property type="entry name" value="RRNA 2-O-METHYLTRANSFERASE FIBRILLARIN"/>
    <property type="match status" value="1"/>
</dbReference>
<dbReference type="Pfam" id="PF01269">
    <property type="entry name" value="Fibrillarin"/>
    <property type="match status" value="1"/>
</dbReference>
<dbReference type="PIRSF" id="PIRSF006540">
    <property type="entry name" value="Nop17p"/>
    <property type="match status" value="1"/>
</dbReference>
<dbReference type="PRINTS" id="PR00052">
    <property type="entry name" value="FIBRILLARIN"/>
</dbReference>
<dbReference type="SMART" id="SM01206">
    <property type="entry name" value="Fibrillarin"/>
    <property type="match status" value="1"/>
</dbReference>
<dbReference type="SUPFAM" id="SSF53335">
    <property type="entry name" value="S-adenosyl-L-methionine-dependent methyltransferases"/>
    <property type="match status" value="1"/>
</dbReference>
<dbReference type="PROSITE" id="PS00566">
    <property type="entry name" value="FIBRILLARIN"/>
    <property type="match status" value="1"/>
</dbReference>
<evidence type="ECO:0000255" key="1">
    <source>
        <dbReference type="HAMAP-Rule" id="MF_00351"/>
    </source>
</evidence>
<evidence type="ECO:0000269" key="2">
    <source>
    </source>
</evidence>
<evidence type="ECO:0000269" key="3">
    <source>
    </source>
</evidence>
<evidence type="ECO:0000269" key="4">
    <source>
    </source>
</evidence>
<evidence type="ECO:0000269" key="5">
    <source>
    </source>
</evidence>
<evidence type="ECO:0007829" key="6">
    <source>
        <dbReference type="PDB" id="1PRY"/>
    </source>
</evidence>
<evidence type="ECO:0007829" key="7">
    <source>
        <dbReference type="PDB" id="2NNW"/>
    </source>
</evidence>
<evidence type="ECO:0007829" key="8">
    <source>
        <dbReference type="PDB" id="3NMU"/>
    </source>
</evidence>
<evidence type="ECO:0007829" key="9">
    <source>
        <dbReference type="PDB" id="3NVK"/>
    </source>
</evidence>
<evidence type="ECO:0007829" key="10">
    <source>
        <dbReference type="PDB" id="3NVM"/>
    </source>
</evidence>
<gene>
    <name evidence="1" type="primary">flpA</name>
    <name type="ordered locus">PF0059</name>
</gene>
<feature type="chain" id="PRO_0000148545" description="Fibrillarin-like rRNA/tRNA 2'-O-methyltransferase">
    <location>
        <begin position="1"/>
        <end position="227"/>
    </location>
</feature>
<feature type="binding site" evidence="1">
    <location>
        <begin position="86"/>
        <end position="87"/>
    </location>
    <ligand>
        <name>S-adenosyl-L-methionine</name>
        <dbReference type="ChEBI" id="CHEBI:59789"/>
    </ligand>
</feature>
<feature type="binding site">
    <location>
        <begin position="105"/>
        <end position="106"/>
    </location>
    <ligand>
        <name>S-adenosyl-L-methionine</name>
        <dbReference type="ChEBI" id="CHEBI:59789"/>
    </ligand>
</feature>
<feature type="binding site">
    <location>
        <begin position="130"/>
        <end position="131"/>
    </location>
    <ligand>
        <name>S-adenosyl-L-methionine</name>
        <dbReference type="ChEBI" id="CHEBI:59789"/>
    </ligand>
</feature>
<feature type="binding site">
    <location>
        <begin position="150"/>
        <end position="153"/>
    </location>
    <ligand>
        <name>S-adenosyl-L-methionine</name>
        <dbReference type="ChEBI" id="CHEBI:59789"/>
    </ligand>
</feature>
<feature type="strand" evidence="6">
    <location>
        <begin position="3"/>
        <end position="6"/>
    </location>
</feature>
<feature type="strand" evidence="6">
    <location>
        <begin position="12"/>
        <end position="16"/>
    </location>
</feature>
<feature type="strand" evidence="9">
    <location>
        <begin position="18"/>
        <end position="20"/>
    </location>
</feature>
<feature type="strand" evidence="6">
    <location>
        <begin position="22"/>
        <end position="27"/>
    </location>
</feature>
<feature type="strand" evidence="8">
    <location>
        <begin position="29"/>
        <end position="32"/>
    </location>
</feature>
<feature type="strand" evidence="7">
    <location>
        <begin position="35"/>
        <end position="37"/>
    </location>
</feature>
<feature type="strand" evidence="6">
    <location>
        <begin position="40"/>
        <end position="43"/>
    </location>
</feature>
<feature type="strand" evidence="6">
    <location>
        <begin position="46"/>
        <end position="50"/>
    </location>
</feature>
<feature type="turn" evidence="6">
    <location>
        <begin position="53"/>
        <end position="55"/>
    </location>
</feature>
<feature type="helix" evidence="6">
    <location>
        <begin position="57"/>
        <end position="63"/>
    </location>
</feature>
<feature type="strand" evidence="6">
    <location>
        <begin position="76"/>
        <end position="81"/>
    </location>
</feature>
<feature type="helix" evidence="6">
    <location>
        <begin position="87"/>
        <end position="95"/>
    </location>
</feature>
<feature type="turn" evidence="7">
    <location>
        <begin position="96"/>
        <end position="98"/>
    </location>
</feature>
<feature type="strand" evidence="6">
    <location>
        <begin position="99"/>
        <end position="106"/>
    </location>
</feature>
<feature type="helix" evidence="6">
    <location>
        <begin position="108"/>
        <end position="118"/>
    </location>
</feature>
<feature type="strand" evidence="6">
    <location>
        <begin position="124"/>
        <end position="128"/>
    </location>
</feature>
<feature type="strand" evidence="10">
    <location>
        <begin position="131"/>
        <end position="133"/>
    </location>
</feature>
<feature type="helix" evidence="6">
    <location>
        <begin position="134"/>
        <end position="140"/>
    </location>
</feature>
<feature type="strand" evidence="6">
    <location>
        <begin position="144"/>
        <end position="149"/>
    </location>
</feature>
<feature type="helix" evidence="6">
    <location>
        <begin position="156"/>
        <end position="167"/>
    </location>
</feature>
<feature type="strand" evidence="6">
    <location>
        <begin position="168"/>
        <end position="179"/>
    </location>
</feature>
<feature type="helix" evidence="6">
    <location>
        <begin position="180"/>
        <end position="183"/>
    </location>
</feature>
<feature type="strand" evidence="6">
    <location>
        <begin position="185"/>
        <end position="187"/>
    </location>
</feature>
<feature type="helix" evidence="6">
    <location>
        <begin position="189"/>
        <end position="201"/>
    </location>
</feature>
<feature type="strand" evidence="6">
    <location>
        <begin position="204"/>
        <end position="211"/>
    </location>
</feature>
<feature type="turn" evidence="6">
    <location>
        <begin position="213"/>
        <end position="215"/>
    </location>
</feature>
<feature type="strand" evidence="6">
    <location>
        <begin position="216"/>
        <end position="225"/>
    </location>
</feature>
<proteinExistence type="evidence at protein level"/>
<name>FLPA_PYRFU</name>
<accession>Q8U4M2</accession>